<accession>O27993</accession>
<protein>
    <recommendedName>
        <fullName>Uncharacterized protein AF_2291</fullName>
    </recommendedName>
</protein>
<sequence length="261" mass="30377">MDTRLIAIATFVVTFGILIVLKRLNYIESWDTFSILSILAAVLTIAAYFFTLVLFPQDYDQLKKEILDEINESLKNYEIYFKCKDFKKPIVKDGAVRIDKCVVMATKLNLTDHGYIVDLKFRSNWMDSKGTHAILFIDGDDAQINLFEREGEIFYIIKSKNKISGVYIQLKSVKWFDEAFSDNWNNIKIMWDTSKDEIWLEINGIRVSKKLNFDFNLNDSVIYLGSNPLEDTYAEGYFDRIMVYKSADTADFGTPTVRRFE</sequence>
<name>Y2291_ARCFU</name>
<keyword id="KW-1003">Cell membrane</keyword>
<keyword id="KW-0472">Membrane</keyword>
<keyword id="KW-1185">Reference proteome</keyword>
<keyword id="KW-0812">Transmembrane</keyword>
<keyword id="KW-1133">Transmembrane helix</keyword>
<gene>
    <name type="ordered locus">AF_2291</name>
</gene>
<comment type="subcellular location">
    <subcellularLocation>
        <location evidence="2">Cell membrane</location>
        <topology evidence="2">Multi-pass membrane protein</topology>
    </subcellularLocation>
</comment>
<reference key="1">
    <citation type="journal article" date="1997" name="Nature">
        <title>The complete genome sequence of the hyperthermophilic, sulphate-reducing archaeon Archaeoglobus fulgidus.</title>
        <authorList>
            <person name="Klenk H.-P."/>
            <person name="Clayton R.A."/>
            <person name="Tomb J.-F."/>
            <person name="White O."/>
            <person name="Nelson K.E."/>
            <person name="Ketchum K.A."/>
            <person name="Dodson R.J."/>
            <person name="Gwinn M.L."/>
            <person name="Hickey E.K."/>
            <person name="Peterson J.D."/>
            <person name="Richardson D.L."/>
            <person name="Kerlavage A.R."/>
            <person name="Graham D.E."/>
            <person name="Kyrpides N.C."/>
            <person name="Fleischmann R.D."/>
            <person name="Quackenbush J."/>
            <person name="Lee N.H."/>
            <person name="Sutton G.G."/>
            <person name="Gill S.R."/>
            <person name="Kirkness E.F."/>
            <person name="Dougherty B.A."/>
            <person name="McKenney K."/>
            <person name="Adams M.D."/>
            <person name="Loftus B.J."/>
            <person name="Peterson S.N."/>
            <person name="Reich C.I."/>
            <person name="McNeil L.K."/>
            <person name="Badger J.H."/>
            <person name="Glodek A."/>
            <person name="Zhou L."/>
            <person name="Overbeek R."/>
            <person name="Gocayne J.D."/>
            <person name="Weidman J.F."/>
            <person name="McDonald L.A."/>
            <person name="Utterback T.R."/>
            <person name="Cotton M.D."/>
            <person name="Spriggs T."/>
            <person name="Artiach P."/>
            <person name="Kaine B.P."/>
            <person name="Sykes S.M."/>
            <person name="Sadow P.W."/>
            <person name="D'Andrea K.P."/>
            <person name="Bowman C."/>
            <person name="Fujii C."/>
            <person name="Garland S.A."/>
            <person name="Mason T.M."/>
            <person name="Olsen G.J."/>
            <person name="Fraser C.M."/>
            <person name="Smith H.O."/>
            <person name="Woese C.R."/>
            <person name="Venter J.C."/>
        </authorList>
    </citation>
    <scope>NUCLEOTIDE SEQUENCE [LARGE SCALE GENOMIC DNA]</scope>
    <source>
        <strain>ATCC 49558 / DSM 4304 / JCM 9628 / NBRC 100126 / VC-16</strain>
    </source>
</reference>
<dbReference type="EMBL" id="AE000782">
    <property type="protein sequence ID" value="AAB88968.1"/>
    <property type="molecule type" value="Genomic_DNA"/>
</dbReference>
<dbReference type="PIR" id="C69536">
    <property type="entry name" value="C69536"/>
</dbReference>
<dbReference type="RefSeq" id="WP_010879780.1">
    <property type="nucleotide sequence ID" value="NC_000917.1"/>
</dbReference>
<dbReference type="PaxDb" id="224325-AF_2291"/>
<dbReference type="EnsemblBacteria" id="AAB88968">
    <property type="protein sequence ID" value="AAB88968"/>
    <property type="gene ID" value="AF_2291"/>
</dbReference>
<dbReference type="KEGG" id="afu:AF_2291"/>
<dbReference type="eggNOG" id="arCOG07813">
    <property type="taxonomic scope" value="Archaea"/>
</dbReference>
<dbReference type="HOGENOM" id="CLU_1063957_0_0_2"/>
<dbReference type="Proteomes" id="UP000002199">
    <property type="component" value="Chromosome"/>
</dbReference>
<dbReference type="GO" id="GO:0005886">
    <property type="term" value="C:plasma membrane"/>
    <property type="evidence" value="ECO:0007669"/>
    <property type="project" value="UniProtKB-SubCell"/>
</dbReference>
<dbReference type="InterPro" id="IPR013320">
    <property type="entry name" value="ConA-like_dom_sf"/>
</dbReference>
<dbReference type="SUPFAM" id="SSF49899">
    <property type="entry name" value="Concanavalin A-like lectins/glucanases"/>
    <property type="match status" value="1"/>
</dbReference>
<evidence type="ECO:0000255" key="1"/>
<evidence type="ECO:0000305" key="2"/>
<feature type="chain" id="PRO_0000128132" description="Uncharacterized protein AF_2291">
    <location>
        <begin position="1"/>
        <end position="261"/>
    </location>
</feature>
<feature type="transmembrane region" description="Helical" evidence="1">
    <location>
        <begin position="4"/>
        <end position="21"/>
    </location>
</feature>
<feature type="transmembrane region" description="Helical" evidence="1">
    <location>
        <begin position="33"/>
        <end position="55"/>
    </location>
</feature>
<proteinExistence type="predicted"/>
<organism>
    <name type="scientific">Archaeoglobus fulgidus (strain ATCC 49558 / DSM 4304 / JCM 9628 / NBRC 100126 / VC-16)</name>
    <dbReference type="NCBI Taxonomy" id="224325"/>
    <lineage>
        <taxon>Archaea</taxon>
        <taxon>Methanobacteriati</taxon>
        <taxon>Methanobacteriota</taxon>
        <taxon>Archaeoglobi</taxon>
        <taxon>Archaeoglobales</taxon>
        <taxon>Archaeoglobaceae</taxon>
        <taxon>Archaeoglobus</taxon>
    </lineage>
</organism>